<protein>
    <recommendedName>
        <fullName evidence="1">Fe/S biogenesis protein NfuA</fullName>
    </recommendedName>
</protein>
<comment type="function">
    <text evidence="1">Involved in iron-sulfur cluster biogenesis. Binds a 4Fe-4S cluster, can transfer this cluster to apoproteins, and thereby intervenes in the maturation of Fe/S proteins. Could also act as a scaffold/chaperone for damaged Fe/S proteins.</text>
</comment>
<comment type="cofactor">
    <cofactor evidence="1">
        <name>[4Fe-4S] cluster</name>
        <dbReference type="ChEBI" id="CHEBI:49883"/>
    </cofactor>
    <text evidence="1">Binds 1 [4Fe-4S] cluster per subunit. The cluster is presumably bound at the interface of two monomers.</text>
</comment>
<comment type="subunit">
    <text evidence="1">Homodimer.</text>
</comment>
<comment type="similarity">
    <text evidence="1">Belongs to the NfuA family.</text>
</comment>
<evidence type="ECO:0000255" key="1">
    <source>
        <dbReference type="HAMAP-Rule" id="MF_01637"/>
    </source>
</evidence>
<proteinExistence type="inferred from homology"/>
<feature type="chain" id="PRO_0000268239" description="Fe/S biogenesis protein NfuA">
    <location>
        <begin position="1"/>
        <end position="192"/>
    </location>
</feature>
<feature type="binding site" evidence="1">
    <location>
        <position position="149"/>
    </location>
    <ligand>
        <name>[4Fe-4S] cluster</name>
        <dbReference type="ChEBI" id="CHEBI:49883"/>
    </ligand>
</feature>
<feature type="binding site" evidence="1">
    <location>
        <position position="152"/>
    </location>
    <ligand>
        <name>[4Fe-4S] cluster</name>
        <dbReference type="ChEBI" id="CHEBI:49883"/>
    </ligand>
</feature>
<reference key="1">
    <citation type="submission" date="2006-03" db="EMBL/GenBank/DDBJ databases">
        <title>Complete sequence of Shewanella denitrificans OS217.</title>
        <authorList>
            <consortium name="US DOE Joint Genome Institute"/>
            <person name="Copeland A."/>
            <person name="Lucas S."/>
            <person name="Lapidus A."/>
            <person name="Barry K."/>
            <person name="Detter J.C."/>
            <person name="Glavina del Rio T."/>
            <person name="Hammon N."/>
            <person name="Israni S."/>
            <person name="Dalin E."/>
            <person name="Tice H."/>
            <person name="Pitluck S."/>
            <person name="Brettin T."/>
            <person name="Bruce D."/>
            <person name="Han C."/>
            <person name="Tapia R."/>
            <person name="Gilna P."/>
            <person name="Kiss H."/>
            <person name="Schmutz J."/>
            <person name="Larimer F."/>
            <person name="Land M."/>
            <person name="Hauser L."/>
            <person name="Kyrpides N."/>
            <person name="Lykidis A."/>
            <person name="Richardson P."/>
        </authorList>
    </citation>
    <scope>NUCLEOTIDE SEQUENCE [LARGE SCALE GENOMIC DNA]</scope>
    <source>
        <strain>OS217 / ATCC BAA-1090 / DSM 15013</strain>
    </source>
</reference>
<name>NFUA_SHEDO</name>
<dbReference type="EMBL" id="CP000302">
    <property type="protein sequence ID" value="ABE56803.1"/>
    <property type="molecule type" value="Genomic_DNA"/>
</dbReference>
<dbReference type="RefSeq" id="WP_011497943.1">
    <property type="nucleotide sequence ID" value="NC_007954.1"/>
</dbReference>
<dbReference type="SMR" id="Q12IC3"/>
<dbReference type="STRING" id="318161.Sden_3528"/>
<dbReference type="KEGG" id="sdn:Sden_3528"/>
<dbReference type="eggNOG" id="COG0316">
    <property type="taxonomic scope" value="Bacteria"/>
</dbReference>
<dbReference type="eggNOG" id="COG0694">
    <property type="taxonomic scope" value="Bacteria"/>
</dbReference>
<dbReference type="HOGENOM" id="CLU_094569_0_0_6"/>
<dbReference type="OrthoDB" id="9785450at2"/>
<dbReference type="Proteomes" id="UP000001982">
    <property type="component" value="Chromosome"/>
</dbReference>
<dbReference type="GO" id="GO:0051539">
    <property type="term" value="F:4 iron, 4 sulfur cluster binding"/>
    <property type="evidence" value="ECO:0007669"/>
    <property type="project" value="UniProtKB-UniRule"/>
</dbReference>
<dbReference type="GO" id="GO:0005506">
    <property type="term" value="F:iron ion binding"/>
    <property type="evidence" value="ECO:0007669"/>
    <property type="project" value="InterPro"/>
</dbReference>
<dbReference type="GO" id="GO:0016226">
    <property type="term" value="P:iron-sulfur cluster assembly"/>
    <property type="evidence" value="ECO:0007669"/>
    <property type="project" value="UniProtKB-UniRule"/>
</dbReference>
<dbReference type="GO" id="GO:0051604">
    <property type="term" value="P:protein maturation"/>
    <property type="evidence" value="ECO:0007669"/>
    <property type="project" value="UniProtKB-UniRule"/>
</dbReference>
<dbReference type="Gene3D" id="3.30.300.130">
    <property type="entry name" value="Fe-S cluster assembly (FSCA)"/>
    <property type="match status" value="1"/>
</dbReference>
<dbReference type="Gene3D" id="2.60.300.12">
    <property type="entry name" value="HesB-like domain"/>
    <property type="match status" value="1"/>
</dbReference>
<dbReference type="HAMAP" id="MF_01637">
    <property type="entry name" value="Fe_S_biogen_NfuA"/>
    <property type="match status" value="1"/>
</dbReference>
<dbReference type="InterPro" id="IPR017726">
    <property type="entry name" value="Fe/S_biogenesis_protein_NfuA"/>
</dbReference>
<dbReference type="InterPro" id="IPR000361">
    <property type="entry name" value="FeS_biogenesis"/>
</dbReference>
<dbReference type="InterPro" id="IPR034904">
    <property type="entry name" value="FSCA_dom_sf"/>
</dbReference>
<dbReference type="InterPro" id="IPR035903">
    <property type="entry name" value="HesB-like_dom_sf"/>
</dbReference>
<dbReference type="InterPro" id="IPR001075">
    <property type="entry name" value="NIF_FeS_clus_asmbl_NifU_C"/>
</dbReference>
<dbReference type="NCBIfam" id="NF008392">
    <property type="entry name" value="PRK11190.1"/>
    <property type="match status" value="1"/>
</dbReference>
<dbReference type="NCBIfam" id="TIGR03341">
    <property type="entry name" value="YhgI_GntY"/>
    <property type="match status" value="1"/>
</dbReference>
<dbReference type="PANTHER" id="PTHR11178:SF51">
    <property type="entry name" value="FE_S BIOGENESIS PROTEIN NFUA"/>
    <property type="match status" value="1"/>
</dbReference>
<dbReference type="PANTHER" id="PTHR11178">
    <property type="entry name" value="IRON-SULFUR CLUSTER SCAFFOLD PROTEIN NFU-RELATED"/>
    <property type="match status" value="1"/>
</dbReference>
<dbReference type="Pfam" id="PF01521">
    <property type="entry name" value="Fe-S_biosyn"/>
    <property type="match status" value="1"/>
</dbReference>
<dbReference type="Pfam" id="PF01106">
    <property type="entry name" value="NifU"/>
    <property type="match status" value="1"/>
</dbReference>
<dbReference type="SUPFAM" id="SSF117916">
    <property type="entry name" value="Fe-S cluster assembly (FSCA) domain-like"/>
    <property type="match status" value="1"/>
</dbReference>
<dbReference type="SUPFAM" id="SSF89360">
    <property type="entry name" value="HesB-like domain"/>
    <property type="match status" value="1"/>
</dbReference>
<keyword id="KW-0004">4Fe-4S</keyword>
<keyword id="KW-0408">Iron</keyword>
<keyword id="KW-0411">Iron-sulfur</keyword>
<keyword id="KW-0479">Metal-binding</keyword>
<keyword id="KW-1185">Reference proteome</keyword>
<gene>
    <name evidence="1" type="primary">nfuA</name>
    <name type="ordered locus">Sden_3528</name>
</gene>
<organism>
    <name type="scientific">Shewanella denitrificans (strain OS217 / ATCC BAA-1090 / DSM 15013)</name>
    <dbReference type="NCBI Taxonomy" id="318161"/>
    <lineage>
        <taxon>Bacteria</taxon>
        <taxon>Pseudomonadati</taxon>
        <taxon>Pseudomonadota</taxon>
        <taxon>Gammaproteobacteria</taxon>
        <taxon>Alteromonadales</taxon>
        <taxon>Shewanellaceae</taxon>
        <taxon>Shewanella</taxon>
    </lineage>
</organism>
<accession>Q12IC3</accession>
<sequence length="192" mass="20457">MISISDSAQAHFVKLLADQPAGTHIRVFVISPGTSQAECGVSYCPPDAVESDDVELEFNGFNAMVDAKSVAYLEDASIDFVTDQLGSQLTLKAPNAKMRKVSGDAPLVERIEYVIQSEINPQLASHGGNIMLVEVTDDGVAVLQFGGGCNGCSQVDITLKDGIEKQLLDLFTGELTGVRDVTDHQPGAHSYT</sequence>